<evidence type="ECO:0000255" key="1">
    <source>
        <dbReference type="HAMAP-Rule" id="MF_00373"/>
    </source>
</evidence>
<evidence type="ECO:0000305" key="2"/>
<dbReference type="EMBL" id="CP000438">
    <property type="protein sequence ID" value="ABJ14699.1"/>
    <property type="molecule type" value="Genomic_DNA"/>
</dbReference>
<dbReference type="RefSeq" id="WP_003096556.1">
    <property type="nucleotide sequence ID" value="NZ_CP034244.1"/>
</dbReference>
<dbReference type="SMR" id="Q02E46"/>
<dbReference type="GeneID" id="77223849"/>
<dbReference type="KEGG" id="pau:PA14_70190"/>
<dbReference type="PseudoCAP" id="PA14_70190"/>
<dbReference type="HOGENOM" id="CLU_064548_3_1_6"/>
<dbReference type="BioCyc" id="PAER208963:G1G74-5910-MONOMER"/>
<dbReference type="Proteomes" id="UP000000653">
    <property type="component" value="Chromosome"/>
</dbReference>
<dbReference type="GO" id="GO:0022625">
    <property type="term" value="C:cytosolic large ribosomal subunit"/>
    <property type="evidence" value="ECO:0007669"/>
    <property type="project" value="TreeGrafter"/>
</dbReference>
<dbReference type="GO" id="GO:0003735">
    <property type="term" value="F:structural constituent of ribosome"/>
    <property type="evidence" value="ECO:0007669"/>
    <property type="project" value="InterPro"/>
</dbReference>
<dbReference type="GO" id="GO:0006412">
    <property type="term" value="P:translation"/>
    <property type="evidence" value="ECO:0007669"/>
    <property type="project" value="UniProtKB-UniRule"/>
</dbReference>
<dbReference type="FunFam" id="2.30.170.40:FF:000001">
    <property type="entry name" value="50S ribosomal protein L28"/>
    <property type="match status" value="1"/>
</dbReference>
<dbReference type="Gene3D" id="2.30.170.40">
    <property type="entry name" value="Ribosomal protein L28/L24"/>
    <property type="match status" value="1"/>
</dbReference>
<dbReference type="HAMAP" id="MF_00373">
    <property type="entry name" value="Ribosomal_bL28"/>
    <property type="match status" value="1"/>
</dbReference>
<dbReference type="InterPro" id="IPR026569">
    <property type="entry name" value="Ribosomal_bL28"/>
</dbReference>
<dbReference type="InterPro" id="IPR034704">
    <property type="entry name" value="Ribosomal_bL28/bL31-like_sf"/>
</dbReference>
<dbReference type="InterPro" id="IPR001383">
    <property type="entry name" value="Ribosomal_bL28_bact-type"/>
</dbReference>
<dbReference type="InterPro" id="IPR037147">
    <property type="entry name" value="Ribosomal_bL28_sf"/>
</dbReference>
<dbReference type="NCBIfam" id="TIGR00009">
    <property type="entry name" value="L28"/>
    <property type="match status" value="1"/>
</dbReference>
<dbReference type="PANTHER" id="PTHR13528">
    <property type="entry name" value="39S RIBOSOMAL PROTEIN L28, MITOCHONDRIAL"/>
    <property type="match status" value="1"/>
</dbReference>
<dbReference type="PANTHER" id="PTHR13528:SF2">
    <property type="entry name" value="LARGE RIBOSOMAL SUBUNIT PROTEIN BL28M"/>
    <property type="match status" value="1"/>
</dbReference>
<dbReference type="Pfam" id="PF00830">
    <property type="entry name" value="Ribosomal_L28"/>
    <property type="match status" value="1"/>
</dbReference>
<dbReference type="SUPFAM" id="SSF143800">
    <property type="entry name" value="L28p-like"/>
    <property type="match status" value="1"/>
</dbReference>
<proteinExistence type="inferred from homology"/>
<keyword id="KW-0687">Ribonucleoprotein</keyword>
<keyword id="KW-0689">Ribosomal protein</keyword>
<gene>
    <name evidence="1" type="primary">rpmB</name>
    <name type="ordered locus">PA14_70190</name>
</gene>
<reference key="1">
    <citation type="journal article" date="2006" name="Genome Biol.">
        <title>Genomic analysis reveals that Pseudomonas aeruginosa virulence is combinatorial.</title>
        <authorList>
            <person name="Lee D.G."/>
            <person name="Urbach J.M."/>
            <person name="Wu G."/>
            <person name="Liberati N.T."/>
            <person name="Feinbaum R.L."/>
            <person name="Miyata S."/>
            <person name="Diggins L.T."/>
            <person name="He J."/>
            <person name="Saucier M."/>
            <person name="Deziel E."/>
            <person name="Friedman L."/>
            <person name="Li L."/>
            <person name="Grills G."/>
            <person name="Montgomery K."/>
            <person name="Kucherlapati R."/>
            <person name="Rahme L.G."/>
            <person name="Ausubel F.M."/>
        </authorList>
    </citation>
    <scope>NUCLEOTIDE SEQUENCE [LARGE SCALE GENOMIC DNA]</scope>
    <source>
        <strain>UCBPP-PA14</strain>
    </source>
</reference>
<protein>
    <recommendedName>
        <fullName evidence="1">Large ribosomal subunit protein bL28</fullName>
    </recommendedName>
    <alternativeName>
        <fullName evidence="2">50S ribosomal protein L28</fullName>
    </alternativeName>
</protein>
<accession>Q02E46</accession>
<feature type="chain" id="PRO_1000007312" description="Large ribosomal subunit protein bL28">
    <location>
        <begin position="1"/>
        <end position="78"/>
    </location>
</feature>
<organism>
    <name type="scientific">Pseudomonas aeruginosa (strain UCBPP-PA14)</name>
    <dbReference type="NCBI Taxonomy" id="208963"/>
    <lineage>
        <taxon>Bacteria</taxon>
        <taxon>Pseudomonadati</taxon>
        <taxon>Pseudomonadota</taxon>
        <taxon>Gammaproteobacteria</taxon>
        <taxon>Pseudomonadales</taxon>
        <taxon>Pseudomonadaceae</taxon>
        <taxon>Pseudomonas</taxon>
    </lineage>
</organism>
<comment type="similarity">
    <text evidence="1">Belongs to the bacterial ribosomal protein bL28 family.</text>
</comment>
<name>RL28_PSEAB</name>
<sequence>MSRVCQVTGKGPVTGNNISHAHNKTRRRFLPNLQHHRFWVESEKRFVRLRVSAKGMRIIDKRGIEAVLADLRARGEKF</sequence>